<keyword id="KW-0004">4Fe-4S</keyword>
<keyword id="KW-0249">Electron transport</keyword>
<keyword id="KW-0408">Iron</keyword>
<keyword id="KW-0411">Iron-sulfur</keyword>
<keyword id="KW-0479">Metal-binding</keyword>
<keyword id="KW-0500">Molybdenum</keyword>
<keyword id="KW-0534">Nitrate assimilation</keyword>
<keyword id="KW-0560">Oxidoreductase</keyword>
<keyword id="KW-0574">Periplasm</keyword>
<keyword id="KW-0732">Signal</keyword>
<keyword id="KW-0813">Transport</keyword>
<evidence type="ECO:0000255" key="1">
    <source>
        <dbReference type="HAMAP-Rule" id="MF_01630"/>
    </source>
</evidence>
<comment type="function">
    <text evidence="1">Catalytic subunit of the periplasmic nitrate reductase complex NapAB. Receives electrons from NapB and catalyzes the reduction of nitrate to nitrite.</text>
</comment>
<comment type="catalytic activity">
    <reaction evidence="1">
        <text>2 Fe(II)-[cytochrome] + nitrate + 2 H(+) = 2 Fe(III)-[cytochrome] + nitrite + H2O</text>
        <dbReference type="Rhea" id="RHEA:12909"/>
        <dbReference type="Rhea" id="RHEA-COMP:11777"/>
        <dbReference type="Rhea" id="RHEA-COMP:11778"/>
        <dbReference type="ChEBI" id="CHEBI:15377"/>
        <dbReference type="ChEBI" id="CHEBI:15378"/>
        <dbReference type="ChEBI" id="CHEBI:16301"/>
        <dbReference type="ChEBI" id="CHEBI:17632"/>
        <dbReference type="ChEBI" id="CHEBI:29033"/>
        <dbReference type="ChEBI" id="CHEBI:29034"/>
        <dbReference type="EC" id="1.9.6.1"/>
    </reaction>
</comment>
<comment type="cofactor">
    <cofactor evidence="1">
        <name>[4Fe-4S] cluster</name>
        <dbReference type="ChEBI" id="CHEBI:49883"/>
    </cofactor>
    <text evidence="1">Binds 1 [4Fe-4S] cluster.</text>
</comment>
<comment type="cofactor">
    <cofactor evidence="1">
        <name>Mo-bis(molybdopterin guanine dinucleotide)</name>
        <dbReference type="ChEBI" id="CHEBI:60539"/>
    </cofactor>
    <text evidence="1">Binds 1 molybdenum-bis(molybdopterin guanine dinucleotide) (Mo-bis-MGD) cofactor per subunit.</text>
</comment>
<comment type="subunit">
    <text evidence="1">Component of the periplasmic nitrate reductase NapAB complex composed of NapA and NapB.</text>
</comment>
<comment type="subcellular location">
    <subcellularLocation>
        <location evidence="1">Periplasm</location>
    </subcellularLocation>
</comment>
<comment type="PTM">
    <text evidence="1">Predicted to be exported by the Tat system. The position of the signal peptide cleavage has not been experimentally proven.</text>
</comment>
<comment type="similarity">
    <text evidence="1">Belongs to the prokaryotic molybdopterin-containing oxidoreductase family. NasA/NapA/NarB subfamily.</text>
</comment>
<reference key="1">
    <citation type="journal article" date="2005" name="PLoS Biol.">
        <title>Major structural differences and novel potential virulence mechanisms from the genomes of multiple Campylobacter species.</title>
        <authorList>
            <person name="Fouts D.E."/>
            <person name="Mongodin E.F."/>
            <person name="Mandrell R.E."/>
            <person name="Miller W.G."/>
            <person name="Rasko D.A."/>
            <person name="Ravel J."/>
            <person name="Brinkac L.M."/>
            <person name="DeBoy R.T."/>
            <person name="Parker C.T."/>
            <person name="Daugherty S.C."/>
            <person name="Dodson R.J."/>
            <person name="Durkin A.S."/>
            <person name="Madupu R."/>
            <person name="Sullivan S.A."/>
            <person name="Shetty J.U."/>
            <person name="Ayodeji M.A."/>
            <person name="Shvartsbeyn A."/>
            <person name="Schatz M.C."/>
            <person name="Badger J.H."/>
            <person name="Fraser C.M."/>
            <person name="Nelson K.E."/>
        </authorList>
    </citation>
    <scope>NUCLEOTIDE SEQUENCE [LARGE SCALE GENOMIC DNA]</scope>
    <source>
        <strain>RM1221</strain>
    </source>
</reference>
<gene>
    <name evidence="1" type="primary">napA</name>
    <name type="ordered locus">CJE0871</name>
</gene>
<protein>
    <recommendedName>
        <fullName evidence="1">Periplasmic nitrate reductase</fullName>
        <ecNumber evidence="1">1.9.6.1</ecNumber>
    </recommendedName>
</protein>
<proteinExistence type="inferred from homology"/>
<accession>Q5HV12</accession>
<name>NAPA_CAMJR</name>
<sequence length="924" mass="104944">MNRRDFIKNTAIASAASVAGLSVPSSMLGAQEEDWKWDKAVCRFCGTGCGIMIARKDGKIVATKGDPAAPVNRGLNCIKGYFNAKIMYGEDRLVMPLLRMNEKGEFDKKGKFQQVSWQRAFDEMEKQFKKAYNELGVTGIGIFGSGQYTIQEGYAALKLAKAGFRTNNIDPNARHCMASAVVGFMQTFGVDEPSGCYDDIELTDTIITWGANMAEMHPILWSRVSDRKLSNLDKVKVVNLSTFSNRTSNIADIEIIFKPNTDLAIWNYIAREIVYNHPEAMDMKFIKDHCVFATGYADIGYGMRNNPNHPKFKESEKDTVEKENVITLDDEEATSLSYLGVKAGDKFEMKHQGVADKNWEISFDEFKKGLAPYTLEYTARVAKGDDNESLEDFKKKLQELANLYIEKNRKVVSFWTMGFNQHTRGSWVNEQAYMVHFLLGKQAKPGSGAFSLTGQPSACGTAREVGTFSHRLPADMVVANPKHREISEKIWKVPAKTINPKPGSPYLNIMRDLEDGKIKFAWVQVNNPWQNTANANHWIAAAREMDNFIVVSDCYPGISAKVADLILPSAMIYEKWGAYGNAERRTQHWKQQVLPVGAAMSDTWQILEFAKRFKLKEVWKEQKVDNKLTLPSVLEEAKAMGYSEDDTLFDVLFANKEAKSFNPNDAIAKGFDNTDVKGDERKIQGSDGKEFTGYGFFVQKYLWEEYRKFGLGHGHDLADFDTYHKVRGLRWPVVNGKETQWRFNTKFDYYAKKAAPNSDFAFYGDFNKMLTNGDLIAPKDEKEHSIKNKAKIFFRPFMKAPERPSKEYPFWLATGRVLEHWHSGTMTMRVPELYRAVPEALCYMSEKDGEKLGLNQGDLVWVESRRGKVKARVDMRGRNKPPVGLVYVPWFDENVYINKVTLDATCPLSKQTDFKKCAVKIYKA</sequence>
<dbReference type="EC" id="1.9.6.1" evidence="1"/>
<dbReference type="EMBL" id="CP000025">
    <property type="protein sequence ID" value="AAW35208.1"/>
    <property type="molecule type" value="Genomic_DNA"/>
</dbReference>
<dbReference type="RefSeq" id="WP_002852404.1">
    <property type="nucleotide sequence ID" value="NC_003912.7"/>
</dbReference>
<dbReference type="SMR" id="Q5HV12"/>
<dbReference type="KEGG" id="cjr:CJE0871"/>
<dbReference type="HOGENOM" id="CLU_000422_13_4_7"/>
<dbReference type="GO" id="GO:0016020">
    <property type="term" value="C:membrane"/>
    <property type="evidence" value="ECO:0007669"/>
    <property type="project" value="TreeGrafter"/>
</dbReference>
<dbReference type="GO" id="GO:0009325">
    <property type="term" value="C:nitrate reductase complex"/>
    <property type="evidence" value="ECO:0007669"/>
    <property type="project" value="TreeGrafter"/>
</dbReference>
<dbReference type="GO" id="GO:0042597">
    <property type="term" value="C:periplasmic space"/>
    <property type="evidence" value="ECO:0007669"/>
    <property type="project" value="UniProtKB-SubCell"/>
</dbReference>
<dbReference type="GO" id="GO:0051539">
    <property type="term" value="F:4 iron, 4 sulfur cluster binding"/>
    <property type="evidence" value="ECO:0007669"/>
    <property type="project" value="UniProtKB-KW"/>
</dbReference>
<dbReference type="GO" id="GO:0009055">
    <property type="term" value="F:electron transfer activity"/>
    <property type="evidence" value="ECO:0007669"/>
    <property type="project" value="UniProtKB-UniRule"/>
</dbReference>
<dbReference type="GO" id="GO:0005506">
    <property type="term" value="F:iron ion binding"/>
    <property type="evidence" value="ECO:0007669"/>
    <property type="project" value="UniProtKB-UniRule"/>
</dbReference>
<dbReference type="GO" id="GO:0030151">
    <property type="term" value="F:molybdenum ion binding"/>
    <property type="evidence" value="ECO:0007669"/>
    <property type="project" value="InterPro"/>
</dbReference>
<dbReference type="GO" id="GO:0043546">
    <property type="term" value="F:molybdopterin cofactor binding"/>
    <property type="evidence" value="ECO:0007669"/>
    <property type="project" value="InterPro"/>
</dbReference>
<dbReference type="GO" id="GO:0050140">
    <property type="term" value="F:nitrate reductase (cytochrome) activity"/>
    <property type="evidence" value="ECO:0007669"/>
    <property type="project" value="UniProtKB-EC"/>
</dbReference>
<dbReference type="GO" id="GO:0006777">
    <property type="term" value="P:Mo-molybdopterin cofactor biosynthetic process"/>
    <property type="evidence" value="ECO:0007669"/>
    <property type="project" value="UniProtKB-UniRule"/>
</dbReference>
<dbReference type="GO" id="GO:0042128">
    <property type="term" value="P:nitrate assimilation"/>
    <property type="evidence" value="ECO:0007669"/>
    <property type="project" value="UniProtKB-UniRule"/>
</dbReference>
<dbReference type="CDD" id="cd02791">
    <property type="entry name" value="MopB_CT_Nitrate-R-NapA-like"/>
    <property type="match status" value="1"/>
</dbReference>
<dbReference type="FunFam" id="2.40.40.20:FF:000005">
    <property type="entry name" value="Periplasmic nitrate reductase"/>
    <property type="match status" value="1"/>
</dbReference>
<dbReference type="Gene3D" id="2.40.40.20">
    <property type="match status" value="1"/>
</dbReference>
<dbReference type="Gene3D" id="3.30.200.210">
    <property type="match status" value="2"/>
</dbReference>
<dbReference type="Gene3D" id="3.40.50.740">
    <property type="match status" value="1"/>
</dbReference>
<dbReference type="Gene3D" id="3.40.228.10">
    <property type="entry name" value="Dimethylsulfoxide Reductase, domain 2"/>
    <property type="match status" value="1"/>
</dbReference>
<dbReference type="HAMAP" id="MF_01630">
    <property type="entry name" value="Nitrate_reduct_NapA"/>
    <property type="match status" value="1"/>
</dbReference>
<dbReference type="InterPro" id="IPR009010">
    <property type="entry name" value="Asp_de-COase-like_dom_sf"/>
</dbReference>
<dbReference type="InterPro" id="IPR041957">
    <property type="entry name" value="CT_Nitrate-R-NapA-like"/>
</dbReference>
<dbReference type="InterPro" id="IPR006657">
    <property type="entry name" value="MoPterin_dinucl-bd_dom"/>
</dbReference>
<dbReference type="InterPro" id="IPR006656">
    <property type="entry name" value="Mopterin_OxRdtase"/>
</dbReference>
<dbReference type="InterPro" id="IPR006963">
    <property type="entry name" value="Mopterin_OxRdtase_4Fe-4S_dom"/>
</dbReference>
<dbReference type="InterPro" id="IPR027467">
    <property type="entry name" value="MopterinOxRdtase_cofactor_BS"/>
</dbReference>
<dbReference type="InterPro" id="IPR010051">
    <property type="entry name" value="Periplasm_NO3_reductase_lsu"/>
</dbReference>
<dbReference type="InterPro" id="IPR050123">
    <property type="entry name" value="Prok_molybdopt-oxidoreductase"/>
</dbReference>
<dbReference type="InterPro" id="IPR019546">
    <property type="entry name" value="TAT_signal_bac_arc"/>
</dbReference>
<dbReference type="NCBIfam" id="TIGR01706">
    <property type="entry name" value="NAPA"/>
    <property type="match status" value="1"/>
</dbReference>
<dbReference type="NCBIfam" id="NF010055">
    <property type="entry name" value="PRK13532.1"/>
    <property type="match status" value="1"/>
</dbReference>
<dbReference type="NCBIfam" id="TIGR01409">
    <property type="entry name" value="TAT_signal_seq"/>
    <property type="match status" value="1"/>
</dbReference>
<dbReference type="PANTHER" id="PTHR43105:SF11">
    <property type="entry name" value="PERIPLASMIC NITRATE REDUCTASE"/>
    <property type="match status" value="1"/>
</dbReference>
<dbReference type="PANTHER" id="PTHR43105">
    <property type="entry name" value="RESPIRATORY NITRATE REDUCTASE"/>
    <property type="match status" value="1"/>
</dbReference>
<dbReference type="Pfam" id="PF04879">
    <property type="entry name" value="Molybdop_Fe4S4"/>
    <property type="match status" value="1"/>
</dbReference>
<dbReference type="Pfam" id="PF00384">
    <property type="entry name" value="Molybdopterin"/>
    <property type="match status" value="1"/>
</dbReference>
<dbReference type="Pfam" id="PF01568">
    <property type="entry name" value="Molydop_binding"/>
    <property type="match status" value="1"/>
</dbReference>
<dbReference type="SMART" id="SM00926">
    <property type="entry name" value="Molybdop_Fe4S4"/>
    <property type="match status" value="1"/>
</dbReference>
<dbReference type="SUPFAM" id="SSF50692">
    <property type="entry name" value="ADC-like"/>
    <property type="match status" value="1"/>
</dbReference>
<dbReference type="SUPFAM" id="SSF53706">
    <property type="entry name" value="Formate dehydrogenase/DMSO reductase, domains 1-3"/>
    <property type="match status" value="1"/>
</dbReference>
<dbReference type="PROSITE" id="PS51669">
    <property type="entry name" value="4FE4S_MOW_BIS_MGD"/>
    <property type="match status" value="1"/>
</dbReference>
<dbReference type="PROSITE" id="PS00551">
    <property type="entry name" value="MOLYBDOPTERIN_PROK_1"/>
    <property type="match status" value="1"/>
</dbReference>
<organism>
    <name type="scientific">Campylobacter jejuni (strain RM1221)</name>
    <dbReference type="NCBI Taxonomy" id="195099"/>
    <lineage>
        <taxon>Bacteria</taxon>
        <taxon>Pseudomonadati</taxon>
        <taxon>Campylobacterota</taxon>
        <taxon>Epsilonproteobacteria</taxon>
        <taxon>Campylobacterales</taxon>
        <taxon>Campylobacteraceae</taxon>
        <taxon>Campylobacter</taxon>
    </lineage>
</organism>
<feature type="signal peptide" description="Tat-type signal" evidence="1">
    <location>
        <begin position="1"/>
        <end position="30"/>
    </location>
</feature>
<feature type="chain" id="PRO_0000045981" description="Periplasmic nitrate reductase" evidence="1">
    <location>
        <begin position="31"/>
        <end position="924"/>
    </location>
</feature>
<feature type="domain" description="4Fe-4S Mo/W bis-MGD-type" evidence="1">
    <location>
        <begin position="35"/>
        <end position="91"/>
    </location>
</feature>
<feature type="binding site" evidence="1">
    <location>
        <position position="42"/>
    </location>
    <ligand>
        <name>[4Fe-4S] cluster</name>
        <dbReference type="ChEBI" id="CHEBI:49883"/>
    </ligand>
</feature>
<feature type="binding site" evidence="1">
    <location>
        <position position="45"/>
    </location>
    <ligand>
        <name>[4Fe-4S] cluster</name>
        <dbReference type="ChEBI" id="CHEBI:49883"/>
    </ligand>
</feature>
<feature type="binding site" evidence="1">
    <location>
        <position position="49"/>
    </location>
    <ligand>
        <name>[4Fe-4S] cluster</name>
        <dbReference type="ChEBI" id="CHEBI:49883"/>
    </ligand>
</feature>
<feature type="binding site" evidence="1">
    <location>
        <position position="77"/>
    </location>
    <ligand>
        <name>[4Fe-4S] cluster</name>
        <dbReference type="ChEBI" id="CHEBI:49883"/>
    </ligand>
</feature>
<feature type="binding site" evidence="1">
    <location>
        <position position="79"/>
    </location>
    <ligand>
        <name>Mo-bis(molybdopterin guanine dinucleotide)</name>
        <dbReference type="ChEBI" id="CHEBI:60539"/>
    </ligand>
</feature>
<feature type="binding site" evidence="1">
    <location>
        <position position="147"/>
    </location>
    <ligand>
        <name>Mo-bis(molybdopterin guanine dinucleotide)</name>
        <dbReference type="ChEBI" id="CHEBI:60539"/>
    </ligand>
</feature>
<feature type="binding site" evidence="1">
    <location>
        <position position="172"/>
    </location>
    <ligand>
        <name>Mo-bis(molybdopterin guanine dinucleotide)</name>
        <dbReference type="ChEBI" id="CHEBI:60539"/>
    </ligand>
</feature>
<feature type="binding site" evidence="1">
    <location>
        <position position="176"/>
    </location>
    <ligand>
        <name>Mo-bis(molybdopterin guanine dinucleotide)</name>
        <dbReference type="ChEBI" id="CHEBI:60539"/>
    </ligand>
</feature>
<feature type="binding site" evidence="1">
    <location>
        <begin position="209"/>
        <end position="216"/>
    </location>
    <ligand>
        <name>Mo-bis(molybdopterin guanine dinucleotide)</name>
        <dbReference type="ChEBI" id="CHEBI:60539"/>
    </ligand>
</feature>
<feature type="binding site" evidence="1">
    <location>
        <position position="417"/>
    </location>
    <ligand>
        <name>Mo-bis(molybdopterin guanine dinucleotide)</name>
        <dbReference type="ChEBI" id="CHEBI:60539"/>
    </ligand>
</feature>
<feature type="binding site" evidence="1">
    <location>
        <position position="421"/>
    </location>
    <ligand>
        <name>Mo-bis(molybdopterin guanine dinucleotide)</name>
        <dbReference type="ChEBI" id="CHEBI:60539"/>
    </ligand>
</feature>
<feature type="binding site" evidence="1">
    <location>
        <position position="527"/>
    </location>
    <ligand>
        <name>Mo-bis(molybdopterin guanine dinucleotide)</name>
        <dbReference type="ChEBI" id="CHEBI:60539"/>
    </ligand>
</feature>
<feature type="binding site" evidence="1">
    <location>
        <begin position="552"/>
        <end position="553"/>
    </location>
    <ligand>
        <name>Mo-bis(molybdopterin guanine dinucleotide)</name>
        <dbReference type="ChEBI" id="CHEBI:60539"/>
    </ligand>
</feature>
<feature type="binding site" evidence="1">
    <location>
        <position position="575"/>
    </location>
    <ligand>
        <name>Mo-bis(molybdopterin guanine dinucleotide)</name>
        <dbReference type="ChEBI" id="CHEBI:60539"/>
    </ligand>
</feature>
<feature type="binding site" evidence="1">
    <location>
        <position position="602"/>
    </location>
    <ligand>
        <name>Mo-bis(molybdopterin guanine dinucleotide)</name>
        <dbReference type="ChEBI" id="CHEBI:60539"/>
    </ligand>
</feature>
<feature type="binding site" evidence="1">
    <location>
        <begin position="814"/>
        <end position="823"/>
    </location>
    <ligand>
        <name>Mo-bis(molybdopterin guanine dinucleotide)</name>
        <dbReference type="ChEBI" id="CHEBI:60539"/>
    </ligand>
</feature>
<feature type="binding site" evidence="1">
    <location>
        <position position="890"/>
    </location>
    <ligand>
        <name>substrate</name>
    </ligand>
</feature>
<feature type="binding site" evidence="1">
    <location>
        <position position="898"/>
    </location>
    <ligand>
        <name>Mo-bis(molybdopterin guanine dinucleotide)</name>
        <dbReference type="ChEBI" id="CHEBI:60539"/>
    </ligand>
</feature>
<feature type="binding site" evidence="1">
    <location>
        <position position="915"/>
    </location>
    <ligand>
        <name>Mo-bis(molybdopterin guanine dinucleotide)</name>
        <dbReference type="ChEBI" id="CHEBI:60539"/>
    </ligand>
</feature>